<protein>
    <recommendedName>
        <fullName>Uncharacterized protein YjbR</fullName>
    </recommendedName>
</protein>
<proteinExistence type="evidence at protein level"/>
<organism>
    <name type="scientific">Escherichia coli (strain K12)</name>
    <dbReference type="NCBI Taxonomy" id="83333"/>
    <lineage>
        <taxon>Bacteria</taxon>
        <taxon>Pseudomonadati</taxon>
        <taxon>Pseudomonadota</taxon>
        <taxon>Gammaproteobacteria</taxon>
        <taxon>Enterobacterales</taxon>
        <taxon>Enterobacteriaceae</taxon>
        <taxon>Escherichia</taxon>
    </lineage>
</organism>
<dbReference type="EMBL" id="U00006">
    <property type="protein sequence ID" value="AAC43151.1"/>
    <property type="molecule type" value="Genomic_DNA"/>
</dbReference>
<dbReference type="EMBL" id="U00096">
    <property type="protein sequence ID" value="AAC77027.1"/>
    <property type="molecule type" value="Genomic_DNA"/>
</dbReference>
<dbReference type="EMBL" id="AP009048">
    <property type="protein sequence ID" value="BAE78059.1"/>
    <property type="molecule type" value="Genomic_DNA"/>
</dbReference>
<dbReference type="PIR" id="H65213">
    <property type="entry name" value="H65213"/>
</dbReference>
<dbReference type="RefSeq" id="NP_418481.1">
    <property type="nucleotide sequence ID" value="NC_000913.3"/>
</dbReference>
<dbReference type="RefSeq" id="WP_000155657.1">
    <property type="nucleotide sequence ID" value="NZ_STEB01000022.1"/>
</dbReference>
<dbReference type="PDB" id="2FKI">
    <property type="method" value="NMR"/>
    <property type="chains" value="A=1-118"/>
</dbReference>
<dbReference type="PDBsum" id="2FKI"/>
<dbReference type="BMRB" id="P0AF50"/>
<dbReference type="SMR" id="P0AF50"/>
<dbReference type="BioGRID" id="4262669">
    <property type="interactions" value="11"/>
</dbReference>
<dbReference type="FunCoup" id="P0AF50">
    <property type="interactions" value="23"/>
</dbReference>
<dbReference type="IntAct" id="P0AF50">
    <property type="interactions" value="1"/>
</dbReference>
<dbReference type="STRING" id="511145.b4057"/>
<dbReference type="jPOST" id="P0AF50"/>
<dbReference type="PaxDb" id="511145-b4057"/>
<dbReference type="EnsemblBacteria" id="AAC77027">
    <property type="protein sequence ID" value="AAC77027"/>
    <property type="gene ID" value="b4057"/>
</dbReference>
<dbReference type="GeneID" id="948560"/>
<dbReference type="KEGG" id="ecj:JW4018"/>
<dbReference type="KEGG" id="eco:b4057"/>
<dbReference type="KEGG" id="ecoc:C3026_21925"/>
<dbReference type="PATRIC" id="fig|511145.12.peg.4178"/>
<dbReference type="EchoBASE" id="EB1880"/>
<dbReference type="eggNOG" id="COG2315">
    <property type="taxonomic scope" value="Bacteria"/>
</dbReference>
<dbReference type="HOGENOM" id="CLU_105851_1_2_6"/>
<dbReference type="InParanoid" id="P0AF50"/>
<dbReference type="OMA" id="KVFAWIF"/>
<dbReference type="OrthoDB" id="3194910at2"/>
<dbReference type="PhylomeDB" id="P0AF50"/>
<dbReference type="BioCyc" id="EcoCyc:EG11936-MONOMER"/>
<dbReference type="EvolutionaryTrace" id="P0AF50"/>
<dbReference type="PRO" id="PR:P0AF50"/>
<dbReference type="Proteomes" id="UP000000625">
    <property type="component" value="Chromosome"/>
</dbReference>
<dbReference type="Gene3D" id="3.90.1150.30">
    <property type="match status" value="1"/>
</dbReference>
<dbReference type="InterPro" id="IPR007351">
    <property type="entry name" value="YjbR"/>
</dbReference>
<dbReference type="InterPro" id="IPR038056">
    <property type="entry name" value="YjbR-like_sf"/>
</dbReference>
<dbReference type="PANTHER" id="PTHR35145:SF3">
    <property type="entry name" value="CYTOPLASMIC PROTEIN"/>
    <property type="match status" value="1"/>
</dbReference>
<dbReference type="PANTHER" id="PTHR35145">
    <property type="entry name" value="CYTOPLASMIC PROTEIN-RELATED"/>
    <property type="match status" value="1"/>
</dbReference>
<dbReference type="Pfam" id="PF04237">
    <property type="entry name" value="YjbR"/>
    <property type="match status" value="1"/>
</dbReference>
<dbReference type="SUPFAM" id="SSF142906">
    <property type="entry name" value="YjbR-like"/>
    <property type="match status" value="1"/>
</dbReference>
<feature type="chain" id="PRO_0000169715" description="Uncharacterized protein YjbR">
    <location>
        <begin position="1"/>
        <end position="118"/>
    </location>
</feature>
<feature type="sequence conflict" description="In Ref. 4; AA sequence." evidence="1" ref="4">
    <original>C</original>
    <variation>S</variation>
    <location>
        <position position="10"/>
    </location>
</feature>
<feature type="sequence conflict" description="In Ref. 1; AAC43151." evidence="1" ref="1">
    <original>R</original>
    <variation>G</variation>
    <location>
        <position position="68"/>
    </location>
</feature>
<feature type="helix" evidence="2">
    <location>
        <begin position="3"/>
        <end position="10"/>
    </location>
</feature>
<feature type="strand" evidence="2">
    <location>
        <begin position="17"/>
        <end position="21"/>
    </location>
</feature>
<feature type="turn" evidence="2">
    <location>
        <begin position="22"/>
        <end position="25"/>
    </location>
</feature>
<feature type="strand" evidence="2">
    <location>
        <begin position="26"/>
        <end position="33"/>
    </location>
</feature>
<feature type="strand" evidence="2">
    <location>
        <begin position="35"/>
        <end position="39"/>
    </location>
</feature>
<feature type="strand" evidence="2">
    <location>
        <begin position="47"/>
        <end position="52"/>
    </location>
</feature>
<feature type="helix" evidence="2">
    <location>
        <begin position="54"/>
        <end position="62"/>
    </location>
</feature>
<feature type="turn" evidence="2">
    <location>
        <begin position="75"/>
        <end position="77"/>
    </location>
</feature>
<feature type="strand" evidence="2">
    <location>
        <begin position="78"/>
        <end position="82"/>
    </location>
</feature>
<feature type="turn" evidence="2">
    <location>
        <begin position="84"/>
        <end position="86"/>
    </location>
</feature>
<feature type="helix" evidence="2">
    <location>
        <begin position="89"/>
        <end position="105"/>
    </location>
</feature>
<feature type="helix" evidence="2">
    <location>
        <begin position="109"/>
        <end position="117"/>
    </location>
</feature>
<name>YJBR_ECOLI</name>
<evidence type="ECO:0000305" key="1"/>
<evidence type="ECO:0007829" key="2">
    <source>
        <dbReference type="PDB" id="2FKI"/>
    </source>
</evidence>
<accession>P0AF50</accession>
<accession>P32699</accession>
<accession>Q2M6P7</accession>
<gene>
    <name type="primary">yjbR</name>
    <name type="ordered locus">b4057</name>
    <name type="ordered locus">JW4018</name>
</gene>
<sequence length="118" mass="13519">MTISELLQYCMAKPGAEQSVHNDWKATQIKVEDVLFAMVKEVENRPAVSLKTSPELAELLRQQHSDVRPSRHLNKAHWSTVYLDGSLPDSQIYYLVDASYQQAVNLLPEEKRKLLVQL</sequence>
<reference key="1">
    <citation type="journal article" date="1993" name="Nucleic Acids Res.">
        <title>Analysis of the Escherichia coli genome. IV. DNA sequence of the region from 89.2 to 92.8 minutes.</title>
        <authorList>
            <person name="Blattner F.R."/>
            <person name="Burland V.D."/>
            <person name="Plunkett G. III"/>
            <person name="Sofia H.J."/>
            <person name="Daniels D.L."/>
        </authorList>
    </citation>
    <scope>NUCLEOTIDE SEQUENCE [LARGE SCALE GENOMIC DNA]</scope>
    <source>
        <strain>K12 / MG1655 / ATCC 47076</strain>
    </source>
</reference>
<reference key="2">
    <citation type="journal article" date="1997" name="Science">
        <title>The complete genome sequence of Escherichia coli K-12.</title>
        <authorList>
            <person name="Blattner F.R."/>
            <person name="Plunkett G. III"/>
            <person name="Bloch C.A."/>
            <person name="Perna N.T."/>
            <person name="Burland V."/>
            <person name="Riley M."/>
            <person name="Collado-Vides J."/>
            <person name="Glasner J.D."/>
            <person name="Rode C.K."/>
            <person name="Mayhew G.F."/>
            <person name="Gregor J."/>
            <person name="Davis N.W."/>
            <person name="Kirkpatrick H.A."/>
            <person name="Goeden M.A."/>
            <person name="Rose D.J."/>
            <person name="Mau B."/>
            <person name="Shao Y."/>
        </authorList>
    </citation>
    <scope>NUCLEOTIDE SEQUENCE [LARGE SCALE GENOMIC DNA]</scope>
    <scope>SEQUENCE REVISION TO 68</scope>
    <source>
        <strain>K12 / MG1655 / ATCC 47076</strain>
    </source>
</reference>
<reference key="3">
    <citation type="journal article" date="2006" name="Mol. Syst. Biol.">
        <title>Highly accurate genome sequences of Escherichia coli K-12 strains MG1655 and W3110.</title>
        <authorList>
            <person name="Hayashi K."/>
            <person name="Morooka N."/>
            <person name="Yamamoto Y."/>
            <person name="Fujita K."/>
            <person name="Isono K."/>
            <person name="Choi S."/>
            <person name="Ohtsubo E."/>
            <person name="Baba T."/>
            <person name="Wanner B.L."/>
            <person name="Mori H."/>
            <person name="Horiuchi T."/>
        </authorList>
    </citation>
    <scope>NUCLEOTIDE SEQUENCE [LARGE SCALE GENOMIC DNA]</scope>
    <source>
        <strain>K12 / W3110 / ATCC 27325 / DSM 5911</strain>
    </source>
</reference>
<reference key="4">
    <citation type="journal article" date="1998" name="FEMS Microbiol. Lett.">
        <title>Small genes/gene-products in Escherichia coli K-12.</title>
        <authorList>
            <person name="Wasinger V.C."/>
            <person name="Humphery-Smith I."/>
        </authorList>
    </citation>
    <scope>PROTEIN SEQUENCE OF 1-10</scope>
    <source>
        <strain>K12</strain>
    </source>
</reference>
<keyword id="KW-0002">3D-structure</keyword>
<keyword id="KW-0903">Direct protein sequencing</keyword>
<keyword id="KW-1185">Reference proteome</keyword>